<feature type="chain" id="PRO_1000099882" description="Probable malate:quinone oxidoreductase">
    <location>
        <begin position="1"/>
        <end position="562"/>
    </location>
</feature>
<evidence type="ECO:0000255" key="1">
    <source>
        <dbReference type="HAMAP-Rule" id="MF_00212"/>
    </source>
</evidence>
<comment type="catalytic activity">
    <reaction evidence="1">
        <text>(S)-malate + a quinone = a quinol + oxaloacetate</text>
        <dbReference type="Rhea" id="RHEA:46012"/>
        <dbReference type="ChEBI" id="CHEBI:15589"/>
        <dbReference type="ChEBI" id="CHEBI:16452"/>
        <dbReference type="ChEBI" id="CHEBI:24646"/>
        <dbReference type="ChEBI" id="CHEBI:132124"/>
        <dbReference type="EC" id="1.1.5.4"/>
    </reaction>
</comment>
<comment type="cofactor">
    <cofactor evidence="1">
        <name>FAD</name>
        <dbReference type="ChEBI" id="CHEBI:57692"/>
    </cofactor>
</comment>
<comment type="pathway">
    <text evidence="1">Carbohydrate metabolism; tricarboxylic acid cycle; oxaloacetate from (S)-malate (quinone route): step 1/1.</text>
</comment>
<comment type="similarity">
    <text evidence="1">Belongs to the MQO family.</text>
</comment>
<name>MQO_STRMK</name>
<dbReference type="EC" id="1.1.5.4" evidence="1"/>
<dbReference type="EMBL" id="AM743169">
    <property type="protein sequence ID" value="CAQ44790.1"/>
    <property type="molecule type" value="Genomic_DNA"/>
</dbReference>
<dbReference type="RefSeq" id="WP_012479432.1">
    <property type="nucleotide sequence ID" value="NC_010943.1"/>
</dbReference>
<dbReference type="SMR" id="B2FSQ8"/>
<dbReference type="EnsemblBacteria" id="CAQ44790">
    <property type="protein sequence ID" value="CAQ44790"/>
    <property type="gene ID" value="Smlt1234"/>
</dbReference>
<dbReference type="KEGG" id="sml:Smlt1234"/>
<dbReference type="eggNOG" id="COG0579">
    <property type="taxonomic scope" value="Bacteria"/>
</dbReference>
<dbReference type="HOGENOM" id="CLU_028151_0_0_6"/>
<dbReference type="UniPathway" id="UPA00223">
    <property type="reaction ID" value="UER01008"/>
</dbReference>
<dbReference type="Proteomes" id="UP000008840">
    <property type="component" value="Chromosome"/>
</dbReference>
<dbReference type="GO" id="GO:0047545">
    <property type="term" value="F:2-hydroxyglutarate dehydrogenase activity"/>
    <property type="evidence" value="ECO:0007669"/>
    <property type="project" value="TreeGrafter"/>
</dbReference>
<dbReference type="GO" id="GO:0008924">
    <property type="term" value="F:L-malate dehydrogenase (quinone) activity"/>
    <property type="evidence" value="ECO:0007669"/>
    <property type="project" value="UniProtKB-UniRule"/>
</dbReference>
<dbReference type="GO" id="GO:0006099">
    <property type="term" value="P:tricarboxylic acid cycle"/>
    <property type="evidence" value="ECO:0007669"/>
    <property type="project" value="UniProtKB-UniRule"/>
</dbReference>
<dbReference type="Gene3D" id="3.30.9.10">
    <property type="entry name" value="D-Amino Acid Oxidase, subunit A, domain 2"/>
    <property type="match status" value="1"/>
</dbReference>
<dbReference type="Gene3D" id="3.50.50.60">
    <property type="entry name" value="FAD/NAD(P)-binding domain"/>
    <property type="match status" value="1"/>
</dbReference>
<dbReference type="HAMAP" id="MF_00212">
    <property type="entry name" value="MQO"/>
    <property type="match status" value="1"/>
</dbReference>
<dbReference type="InterPro" id="IPR036188">
    <property type="entry name" value="FAD/NAD-bd_sf"/>
</dbReference>
<dbReference type="InterPro" id="IPR006231">
    <property type="entry name" value="MQO"/>
</dbReference>
<dbReference type="NCBIfam" id="TIGR01320">
    <property type="entry name" value="mal_quin_oxido"/>
    <property type="match status" value="1"/>
</dbReference>
<dbReference type="NCBIfam" id="NF003603">
    <property type="entry name" value="PRK05257.1-1"/>
    <property type="match status" value="1"/>
</dbReference>
<dbReference type="NCBIfam" id="NF003605">
    <property type="entry name" value="PRK05257.1-4"/>
    <property type="match status" value="1"/>
</dbReference>
<dbReference type="NCBIfam" id="NF003606">
    <property type="entry name" value="PRK05257.2-1"/>
    <property type="match status" value="1"/>
</dbReference>
<dbReference type="NCBIfam" id="NF003611">
    <property type="entry name" value="PRK05257.3-2"/>
    <property type="match status" value="1"/>
</dbReference>
<dbReference type="NCBIfam" id="NF009875">
    <property type="entry name" value="PRK13339.1"/>
    <property type="match status" value="1"/>
</dbReference>
<dbReference type="PANTHER" id="PTHR43104">
    <property type="entry name" value="L-2-HYDROXYGLUTARATE DEHYDROGENASE, MITOCHONDRIAL"/>
    <property type="match status" value="1"/>
</dbReference>
<dbReference type="PANTHER" id="PTHR43104:SF2">
    <property type="entry name" value="L-2-HYDROXYGLUTARATE DEHYDROGENASE, MITOCHONDRIAL"/>
    <property type="match status" value="1"/>
</dbReference>
<dbReference type="Pfam" id="PF06039">
    <property type="entry name" value="Mqo"/>
    <property type="match status" value="1"/>
</dbReference>
<dbReference type="SUPFAM" id="SSF51905">
    <property type="entry name" value="FAD/NAD(P)-binding domain"/>
    <property type="match status" value="1"/>
</dbReference>
<accession>B2FSQ8</accession>
<gene>
    <name evidence="1" type="primary">mqo</name>
    <name type="ordered locus">Smlt1234</name>
</gene>
<proteinExistence type="inferred from homology"/>
<reference key="1">
    <citation type="journal article" date="2008" name="Genome Biol.">
        <title>The complete genome, comparative and functional analysis of Stenotrophomonas maltophilia reveals an organism heavily shielded by drug resistance determinants.</title>
        <authorList>
            <person name="Crossman L.C."/>
            <person name="Gould V.C."/>
            <person name="Dow J.M."/>
            <person name="Vernikos G.S."/>
            <person name="Okazaki A."/>
            <person name="Sebaihia M."/>
            <person name="Saunders D."/>
            <person name="Arrowsmith C."/>
            <person name="Carver T."/>
            <person name="Peters N."/>
            <person name="Adlem E."/>
            <person name="Kerhornou A."/>
            <person name="Lord A."/>
            <person name="Murphy L."/>
            <person name="Seeger K."/>
            <person name="Squares R."/>
            <person name="Rutter S."/>
            <person name="Quail M.A."/>
            <person name="Rajandream M.A."/>
            <person name="Harris D."/>
            <person name="Churcher C."/>
            <person name="Bentley S.D."/>
            <person name="Parkhill J."/>
            <person name="Thomson N.R."/>
            <person name="Avison M.B."/>
        </authorList>
    </citation>
    <scope>NUCLEOTIDE SEQUENCE [LARGE SCALE GENOMIC DNA]</scope>
    <source>
        <strain>K279a</strain>
    </source>
</reference>
<keyword id="KW-0274">FAD</keyword>
<keyword id="KW-0285">Flavoprotein</keyword>
<keyword id="KW-0560">Oxidoreductase</keyword>
<keyword id="KW-1185">Reference proteome</keyword>
<keyword id="KW-0816">Tricarboxylic acid cycle</keyword>
<protein>
    <recommendedName>
        <fullName evidence="1">Probable malate:quinone oxidoreductase</fullName>
        <ecNumber evidence="1">1.1.5.4</ecNumber>
    </recommendedName>
    <alternativeName>
        <fullName evidence="1">MQO</fullName>
    </alternativeName>
    <alternativeName>
        <fullName evidence="1">Malate dehydrogenase [quinone]</fullName>
    </alternativeName>
</protein>
<organism>
    <name type="scientific">Stenotrophomonas maltophilia (strain K279a)</name>
    <dbReference type="NCBI Taxonomy" id="522373"/>
    <lineage>
        <taxon>Bacteria</taxon>
        <taxon>Pseudomonadati</taxon>
        <taxon>Pseudomonadota</taxon>
        <taxon>Gammaproteobacteria</taxon>
        <taxon>Lysobacterales</taxon>
        <taxon>Lysobacteraceae</taxon>
        <taxon>Stenotrophomonas</taxon>
        <taxon>Stenotrophomonas maltophilia group</taxon>
    </lineage>
</organism>
<sequence>MKKFGKALLALLVLLLLAAALFLYWPLTQRSVPAASNDKPVDVVLVGAGIMSITLATYLQELQPDWNIQVYERLDGVAGESSDGWNNAGTGHSAFAELNYTPELPDGSIETKRAVGIAESFEVSRQFWSHQVKEGRLSQPSDFINPTPHMSFVWGDDNIAYLHKRQQALVKNPLFYGMQYSEDPAQIKQWAPLLMEGRDPKQKVAATWMPLGTDVNFGVITRQLTAGLQRSPNFSLHLNHEVSALRQNADKSWNVTVKDLKAGTESTTHARFVFIGAGGAALKLLQMSGIPESKDYAGFPVGGQFLAFQGQDVTSRHGVKAYGMAETGSPPMSVPHLDARKLDGKPVVLFGPFALYSTKFLKHGSWWDLYSSVNHNNVGPMLEVGKDNLDLVQYLMGQARLNDADRQAELVKYFPTAKPGDWKLVTAGQRVQIIKRDPLKGPVLQFGTEIVTDKDHTLAALLGASPGASTSPPIMLDLMAKAFPDQMKAGWEARLREIVPSYGRKLNDSAALVNEIRTLTSQTLHLPYLEVPVDANAASPAAAAVPAAAKEKRNANEELQAL</sequence>